<evidence type="ECO:0000255" key="1">
    <source>
        <dbReference type="HAMAP-Rule" id="MF_01024"/>
    </source>
</evidence>
<gene>
    <name evidence="1" type="primary">hisD</name>
    <name type="ordered locus">CC_2346</name>
</gene>
<name>HISX_CAUVC</name>
<proteinExistence type="inferred from homology"/>
<keyword id="KW-0028">Amino-acid biosynthesis</keyword>
<keyword id="KW-0368">Histidine biosynthesis</keyword>
<keyword id="KW-0479">Metal-binding</keyword>
<keyword id="KW-0520">NAD</keyword>
<keyword id="KW-0560">Oxidoreductase</keyword>
<keyword id="KW-1185">Reference proteome</keyword>
<keyword id="KW-0862">Zinc</keyword>
<feature type="chain" id="PRO_0000135753" description="Histidinol dehydrogenase">
    <location>
        <begin position="1"/>
        <end position="428"/>
    </location>
</feature>
<feature type="active site" description="Proton acceptor" evidence="1">
    <location>
        <position position="323"/>
    </location>
</feature>
<feature type="active site" description="Proton acceptor" evidence="1">
    <location>
        <position position="324"/>
    </location>
</feature>
<feature type="binding site" evidence="1">
    <location>
        <position position="129"/>
    </location>
    <ligand>
        <name>NAD(+)</name>
        <dbReference type="ChEBI" id="CHEBI:57540"/>
    </ligand>
</feature>
<feature type="binding site" evidence="1">
    <location>
        <position position="188"/>
    </location>
    <ligand>
        <name>NAD(+)</name>
        <dbReference type="ChEBI" id="CHEBI:57540"/>
    </ligand>
</feature>
<feature type="binding site" evidence="1">
    <location>
        <position position="211"/>
    </location>
    <ligand>
        <name>NAD(+)</name>
        <dbReference type="ChEBI" id="CHEBI:57540"/>
    </ligand>
</feature>
<feature type="binding site" evidence="1">
    <location>
        <position position="234"/>
    </location>
    <ligand>
        <name>substrate</name>
    </ligand>
</feature>
<feature type="binding site" evidence="1">
    <location>
        <position position="256"/>
    </location>
    <ligand>
        <name>substrate</name>
    </ligand>
</feature>
<feature type="binding site" evidence="1">
    <location>
        <position position="256"/>
    </location>
    <ligand>
        <name>Zn(2+)</name>
        <dbReference type="ChEBI" id="CHEBI:29105"/>
    </ligand>
</feature>
<feature type="binding site" evidence="1">
    <location>
        <position position="259"/>
    </location>
    <ligand>
        <name>substrate</name>
    </ligand>
</feature>
<feature type="binding site" evidence="1">
    <location>
        <position position="259"/>
    </location>
    <ligand>
        <name>Zn(2+)</name>
        <dbReference type="ChEBI" id="CHEBI:29105"/>
    </ligand>
</feature>
<feature type="binding site" evidence="1">
    <location>
        <position position="324"/>
    </location>
    <ligand>
        <name>substrate</name>
    </ligand>
</feature>
<feature type="binding site" evidence="1">
    <location>
        <position position="357"/>
    </location>
    <ligand>
        <name>substrate</name>
    </ligand>
</feature>
<feature type="binding site" evidence="1">
    <location>
        <position position="357"/>
    </location>
    <ligand>
        <name>Zn(2+)</name>
        <dbReference type="ChEBI" id="CHEBI:29105"/>
    </ligand>
</feature>
<feature type="binding site" evidence="1">
    <location>
        <position position="411"/>
    </location>
    <ligand>
        <name>substrate</name>
    </ligand>
</feature>
<feature type="binding site" evidence="1">
    <location>
        <position position="416"/>
    </location>
    <ligand>
        <name>substrate</name>
    </ligand>
</feature>
<feature type="binding site" evidence="1">
    <location>
        <position position="416"/>
    </location>
    <ligand>
        <name>Zn(2+)</name>
        <dbReference type="ChEBI" id="CHEBI:29105"/>
    </ligand>
</feature>
<comment type="function">
    <text evidence="1">Catalyzes the sequential NAD-dependent oxidations of L-histidinol to L-histidinaldehyde and then to L-histidine.</text>
</comment>
<comment type="catalytic activity">
    <reaction evidence="1">
        <text>L-histidinol + 2 NAD(+) + H2O = L-histidine + 2 NADH + 3 H(+)</text>
        <dbReference type="Rhea" id="RHEA:20641"/>
        <dbReference type="ChEBI" id="CHEBI:15377"/>
        <dbReference type="ChEBI" id="CHEBI:15378"/>
        <dbReference type="ChEBI" id="CHEBI:57540"/>
        <dbReference type="ChEBI" id="CHEBI:57595"/>
        <dbReference type="ChEBI" id="CHEBI:57699"/>
        <dbReference type="ChEBI" id="CHEBI:57945"/>
        <dbReference type="EC" id="1.1.1.23"/>
    </reaction>
</comment>
<comment type="cofactor">
    <cofactor evidence="1">
        <name>Zn(2+)</name>
        <dbReference type="ChEBI" id="CHEBI:29105"/>
    </cofactor>
    <text evidence="1">Binds 1 zinc ion per subunit.</text>
</comment>
<comment type="pathway">
    <text evidence="1">Amino-acid biosynthesis; L-histidine biosynthesis; L-histidine from 5-phospho-alpha-D-ribose 1-diphosphate: step 9/9.</text>
</comment>
<comment type="similarity">
    <text evidence="1">Belongs to the histidinol dehydrogenase family.</text>
</comment>
<dbReference type="EC" id="1.1.1.23" evidence="1"/>
<dbReference type="EMBL" id="AE005673">
    <property type="protein sequence ID" value="AAK24317.1"/>
    <property type="molecule type" value="Genomic_DNA"/>
</dbReference>
<dbReference type="PIR" id="A87540">
    <property type="entry name" value="A87540"/>
</dbReference>
<dbReference type="RefSeq" id="NP_421149.1">
    <property type="nucleotide sequence ID" value="NC_002696.2"/>
</dbReference>
<dbReference type="RefSeq" id="WP_010920204.1">
    <property type="nucleotide sequence ID" value="NC_002696.2"/>
</dbReference>
<dbReference type="SMR" id="Q9A5V1"/>
<dbReference type="STRING" id="190650.CC_2346"/>
<dbReference type="EnsemblBacteria" id="AAK24317">
    <property type="protein sequence ID" value="AAK24317"/>
    <property type="gene ID" value="CC_2346"/>
</dbReference>
<dbReference type="KEGG" id="ccr:CC_2346"/>
<dbReference type="PATRIC" id="fig|190650.5.peg.2367"/>
<dbReference type="eggNOG" id="COG0141">
    <property type="taxonomic scope" value="Bacteria"/>
</dbReference>
<dbReference type="HOGENOM" id="CLU_006732_3_3_5"/>
<dbReference type="BioCyc" id="CAULO:CC2346-MONOMER"/>
<dbReference type="UniPathway" id="UPA00031">
    <property type="reaction ID" value="UER00014"/>
</dbReference>
<dbReference type="Proteomes" id="UP000001816">
    <property type="component" value="Chromosome"/>
</dbReference>
<dbReference type="GO" id="GO:0005829">
    <property type="term" value="C:cytosol"/>
    <property type="evidence" value="ECO:0007669"/>
    <property type="project" value="TreeGrafter"/>
</dbReference>
<dbReference type="GO" id="GO:0004399">
    <property type="term" value="F:histidinol dehydrogenase activity"/>
    <property type="evidence" value="ECO:0007669"/>
    <property type="project" value="UniProtKB-UniRule"/>
</dbReference>
<dbReference type="GO" id="GO:0051287">
    <property type="term" value="F:NAD binding"/>
    <property type="evidence" value="ECO:0007669"/>
    <property type="project" value="InterPro"/>
</dbReference>
<dbReference type="GO" id="GO:0008270">
    <property type="term" value="F:zinc ion binding"/>
    <property type="evidence" value="ECO:0007669"/>
    <property type="project" value="UniProtKB-UniRule"/>
</dbReference>
<dbReference type="GO" id="GO:0000105">
    <property type="term" value="P:L-histidine biosynthetic process"/>
    <property type="evidence" value="ECO:0007669"/>
    <property type="project" value="UniProtKB-UniRule"/>
</dbReference>
<dbReference type="CDD" id="cd06572">
    <property type="entry name" value="Histidinol_dh"/>
    <property type="match status" value="1"/>
</dbReference>
<dbReference type="FunFam" id="3.40.50.1980:FF:000001">
    <property type="entry name" value="Histidinol dehydrogenase"/>
    <property type="match status" value="1"/>
</dbReference>
<dbReference type="FunFam" id="3.40.50.1980:FF:000026">
    <property type="entry name" value="Histidinol dehydrogenase"/>
    <property type="match status" value="1"/>
</dbReference>
<dbReference type="Gene3D" id="1.20.5.1300">
    <property type="match status" value="1"/>
</dbReference>
<dbReference type="Gene3D" id="3.40.50.1980">
    <property type="entry name" value="Nitrogenase molybdenum iron protein domain"/>
    <property type="match status" value="2"/>
</dbReference>
<dbReference type="HAMAP" id="MF_01024">
    <property type="entry name" value="HisD"/>
    <property type="match status" value="1"/>
</dbReference>
<dbReference type="InterPro" id="IPR016161">
    <property type="entry name" value="Ald_DH/histidinol_DH"/>
</dbReference>
<dbReference type="InterPro" id="IPR001692">
    <property type="entry name" value="Histidinol_DH_CS"/>
</dbReference>
<dbReference type="InterPro" id="IPR022695">
    <property type="entry name" value="Histidinol_DH_monofunct"/>
</dbReference>
<dbReference type="InterPro" id="IPR012131">
    <property type="entry name" value="Hstdl_DH"/>
</dbReference>
<dbReference type="NCBIfam" id="TIGR00069">
    <property type="entry name" value="hisD"/>
    <property type="match status" value="1"/>
</dbReference>
<dbReference type="PANTHER" id="PTHR21256:SF2">
    <property type="entry name" value="HISTIDINE BIOSYNTHESIS TRIFUNCTIONAL PROTEIN"/>
    <property type="match status" value="1"/>
</dbReference>
<dbReference type="PANTHER" id="PTHR21256">
    <property type="entry name" value="HISTIDINOL DEHYDROGENASE HDH"/>
    <property type="match status" value="1"/>
</dbReference>
<dbReference type="Pfam" id="PF00815">
    <property type="entry name" value="Histidinol_dh"/>
    <property type="match status" value="1"/>
</dbReference>
<dbReference type="PIRSF" id="PIRSF000099">
    <property type="entry name" value="Histidinol_dh"/>
    <property type="match status" value="1"/>
</dbReference>
<dbReference type="PRINTS" id="PR00083">
    <property type="entry name" value="HOLDHDRGNASE"/>
</dbReference>
<dbReference type="SUPFAM" id="SSF53720">
    <property type="entry name" value="ALDH-like"/>
    <property type="match status" value="1"/>
</dbReference>
<dbReference type="PROSITE" id="PS00611">
    <property type="entry name" value="HISOL_DEHYDROGENASE"/>
    <property type="match status" value="1"/>
</dbReference>
<sequence length="428" mass="45154">MRRFLFSDPDFQTAFKAFLDERRGSPADVDAAVAGVLEAVRTQGIEALLDYSRRFDKVDLTAETIRVTAEEIEAGAAETPADVREAIAFAAARIRAYHSRQRPADQAWTDEAGVELGWRWTPLEAVGVYVPGGRAAYPSTVLMNAVPAQVAGVDRIAMVTPPGKLQPAVLAAAKEAGVTEIWRVGGAQAVAALAYGAGPIQPVDKIVGPGNAYVTAAKRRLYGVVGIDALAGPSEIVVVADNKNNPDWIAADLLSQAEHDPAAQSILITDDEAFAAAVEQAIAERLKTLATGEDAAASWRDHGAVIIAPLDESPALVDAIAPEHVEFALDNPERLSDRVRHAGAIFLGRVTPEAIGDYVAGSNHVLPTSRAARFQSGLSIYDFIKRTSIVKCDPASFAVLGPHTVALAKAEGLPAHALSASVRLPSGD</sequence>
<organism>
    <name type="scientific">Caulobacter vibrioides (strain ATCC 19089 / CIP 103742 / CB 15)</name>
    <name type="common">Caulobacter crescentus</name>
    <dbReference type="NCBI Taxonomy" id="190650"/>
    <lineage>
        <taxon>Bacteria</taxon>
        <taxon>Pseudomonadati</taxon>
        <taxon>Pseudomonadota</taxon>
        <taxon>Alphaproteobacteria</taxon>
        <taxon>Caulobacterales</taxon>
        <taxon>Caulobacteraceae</taxon>
        <taxon>Caulobacter</taxon>
    </lineage>
</organism>
<reference key="1">
    <citation type="journal article" date="2001" name="Proc. Natl. Acad. Sci. U.S.A.">
        <title>Complete genome sequence of Caulobacter crescentus.</title>
        <authorList>
            <person name="Nierman W.C."/>
            <person name="Feldblyum T.V."/>
            <person name="Laub M.T."/>
            <person name="Paulsen I.T."/>
            <person name="Nelson K.E."/>
            <person name="Eisen J.A."/>
            <person name="Heidelberg J.F."/>
            <person name="Alley M.R.K."/>
            <person name="Ohta N."/>
            <person name="Maddock J.R."/>
            <person name="Potocka I."/>
            <person name="Nelson W.C."/>
            <person name="Newton A."/>
            <person name="Stephens C."/>
            <person name="Phadke N.D."/>
            <person name="Ely B."/>
            <person name="DeBoy R.T."/>
            <person name="Dodson R.J."/>
            <person name="Durkin A.S."/>
            <person name="Gwinn M.L."/>
            <person name="Haft D.H."/>
            <person name="Kolonay J.F."/>
            <person name="Smit J."/>
            <person name="Craven M.B."/>
            <person name="Khouri H.M."/>
            <person name="Shetty J."/>
            <person name="Berry K.J."/>
            <person name="Utterback T.R."/>
            <person name="Tran K."/>
            <person name="Wolf A.M."/>
            <person name="Vamathevan J.J."/>
            <person name="Ermolaeva M.D."/>
            <person name="White O."/>
            <person name="Salzberg S.L."/>
            <person name="Venter J.C."/>
            <person name="Shapiro L."/>
            <person name="Fraser C.M."/>
        </authorList>
    </citation>
    <scope>NUCLEOTIDE SEQUENCE [LARGE SCALE GENOMIC DNA]</scope>
    <source>
        <strain>ATCC 19089 / CIP 103742 / CB 15</strain>
    </source>
</reference>
<protein>
    <recommendedName>
        <fullName evidence="1">Histidinol dehydrogenase</fullName>
        <shortName evidence="1">HDH</shortName>
        <ecNumber evidence="1">1.1.1.23</ecNumber>
    </recommendedName>
</protein>
<accession>Q9A5V1</accession>